<protein>
    <recommendedName>
        <fullName evidence="1">Orotidine 5'-phosphate decarboxylase</fullName>
        <ecNumber evidence="1">4.1.1.23</ecNumber>
    </recommendedName>
    <alternativeName>
        <fullName evidence="1">OMP decarboxylase</fullName>
        <shortName evidence="1">OMPDCase</shortName>
        <shortName evidence="1">OMPdecase</shortName>
    </alternativeName>
</protein>
<keyword id="KW-0210">Decarboxylase</keyword>
<keyword id="KW-0456">Lyase</keyword>
<keyword id="KW-0665">Pyrimidine biosynthesis</keyword>
<reference key="1">
    <citation type="submission" date="2008-10" db="EMBL/GenBank/DDBJ databases">
        <title>Genome sequence of Bacillus cereus AH187.</title>
        <authorList>
            <person name="Dodson R.J."/>
            <person name="Durkin A.S."/>
            <person name="Rosovitz M.J."/>
            <person name="Rasko D.A."/>
            <person name="Kolsto A.B."/>
            <person name="Okstad O.A."/>
            <person name="Ravel J."/>
            <person name="Sutton G."/>
        </authorList>
    </citation>
    <scope>NUCLEOTIDE SEQUENCE [LARGE SCALE GENOMIC DNA]</scope>
    <source>
        <strain>AH187</strain>
    </source>
</reference>
<proteinExistence type="inferred from homology"/>
<feature type="chain" id="PRO_1000138514" description="Orotidine 5'-phosphate decarboxylase">
    <location>
        <begin position="1"/>
        <end position="238"/>
    </location>
</feature>
<feature type="active site" description="Proton donor" evidence="1">
    <location>
        <position position="61"/>
    </location>
</feature>
<feature type="binding site" evidence="1">
    <location>
        <position position="10"/>
    </location>
    <ligand>
        <name>substrate</name>
    </ligand>
</feature>
<feature type="binding site" evidence="1">
    <location>
        <position position="32"/>
    </location>
    <ligand>
        <name>substrate</name>
    </ligand>
</feature>
<feature type="binding site" evidence="1">
    <location>
        <begin position="59"/>
        <end position="68"/>
    </location>
    <ligand>
        <name>substrate</name>
    </ligand>
</feature>
<feature type="binding site" evidence="1">
    <location>
        <position position="122"/>
    </location>
    <ligand>
        <name>substrate</name>
    </ligand>
</feature>
<feature type="binding site" evidence="1">
    <location>
        <position position="184"/>
    </location>
    <ligand>
        <name>substrate</name>
    </ligand>
</feature>
<feature type="binding site" evidence="1">
    <location>
        <position position="193"/>
    </location>
    <ligand>
        <name>substrate</name>
    </ligand>
</feature>
<feature type="binding site" evidence="1">
    <location>
        <position position="213"/>
    </location>
    <ligand>
        <name>substrate</name>
    </ligand>
</feature>
<feature type="binding site" evidence="1">
    <location>
        <position position="214"/>
    </location>
    <ligand>
        <name>substrate</name>
    </ligand>
</feature>
<evidence type="ECO:0000255" key="1">
    <source>
        <dbReference type="HAMAP-Rule" id="MF_01200"/>
    </source>
</evidence>
<sequence length="238" mass="26199">MSQSLIVALDFPGKQDVEQFLRHFEGEELFVKVGMELFYKEGPAIITYLKEKGHKIFLDLKLHDIPNTVKSAMRSLASLDVDMVNVHAAGGSSMMKAAIEGLEEGKQEGKERPICIAVTQLTSTSEAMMKKEIGIEKTLEEAVAHYAKLTKESGLDGVVCSTLEVPKLREVCGDEFVTVTPGIRLASDDVNDQVRVATPKRARELGSSYIVVGRSITKAENPLEAYKTVKQQWEGVTV</sequence>
<gene>
    <name evidence="1" type="primary">pyrF</name>
    <name type="ordered locus">BCAH187_A3932</name>
</gene>
<name>PYRF_BACC7</name>
<accession>B7HLL7</accession>
<organism>
    <name type="scientific">Bacillus cereus (strain AH187)</name>
    <dbReference type="NCBI Taxonomy" id="405534"/>
    <lineage>
        <taxon>Bacteria</taxon>
        <taxon>Bacillati</taxon>
        <taxon>Bacillota</taxon>
        <taxon>Bacilli</taxon>
        <taxon>Bacillales</taxon>
        <taxon>Bacillaceae</taxon>
        <taxon>Bacillus</taxon>
        <taxon>Bacillus cereus group</taxon>
    </lineage>
</organism>
<comment type="function">
    <text evidence="1">Catalyzes the decarboxylation of orotidine 5'-monophosphate (OMP) to uridine 5'-monophosphate (UMP).</text>
</comment>
<comment type="catalytic activity">
    <reaction evidence="1">
        <text>orotidine 5'-phosphate + H(+) = UMP + CO2</text>
        <dbReference type="Rhea" id="RHEA:11596"/>
        <dbReference type="ChEBI" id="CHEBI:15378"/>
        <dbReference type="ChEBI" id="CHEBI:16526"/>
        <dbReference type="ChEBI" id="CHEBI:57538"/>
        <dbReference type="ChEBI" id="CHEBI:57865"/>
        <dbReference type="EC" id="4.1.1.23"/>
    </reaction>
</comment>
<comment type="pathway">
    <text evidence="1">Pyrimidine metabolism; UMP biosynthesis via de novo pathway; UMP from orotate: step 2/2.</text>
</comment>
<comment type="subunit">
    <text evidence="1">Homodimer.</text>
</comment>
<comment type="similarity">
    <text evidence="1">Belongs to the OMP decarboxylase family. Type 1 subfamily.</text>
</comment>
<dbReference type="EC" id="4.1.1.23" evidence="1"/>
<dbReference type="EMBL" id="CP001177">
    <property type="protein sequence ID" value="ACJ79121.1"/>
    <property type="molecule type" value="Genomic_DNA"/>
</dbReference>
<dbReference type="SMR" id="B7HLL7"/>
<dbReference type="KEGG" id="bcr:BCAH187_A3932"/>
<dbReference type="HOGENOM" id="CLU_067069_1_1_9"/>
<dbReference type="UniPathway" id="UPA00070">
    <property type="reaction ID" value="UER00120"/>
</dbReference>
<dbReference type="Proteomes" id="UP000002214">
    <property type="component" value="Chromosome"/>
</dbReference>
<dbReference type="GO" id="GO:0005829">
    <property type="term" value="C:cytosol"/>
    <property type="evidence" value="ECO:0007669"/>
    <property type="project" value="TreeGrafter"/>
</dbReference>
<dbReference type="GO" id="GO:0004590">
    <property type="term" value="F:orotidine-5'-phosphate decarboxylase activity"/>
    <property type="evidence" value="ECO:0007669"/>
    <property type="project" value="UniProtKB-UniRule"/>
</dbReference>
<dbReference type="GO" id="GO:0006207">
    <property type="term" value="P:'de novo' pyrimidine nucleobase biosynthetic process"/>
    <property type="evidence" value="ECO:0007669"/>
    <property type="project" value="InterPro"/>
</dbReference>
<dbReference type="GO" id="GO:0044205">
    <property type="term" value="P:'de novo' UMP biosynthetic process"/>
    <property type="evidence" value="ECO:0007669"/>
    <property type="project" value="UniProtKB-UniRule"/>
</dbReference>
<dbReference type="CDD" id="cd04725">
    <property type="entry name" value="OMP_decarboxylase_like"/>
    <property type="match status" value="1"/>
</dbReference>
<dbReference type="FunFam" id="3.20.20.70:FF:000015">
    <property type="entry name" value="Orotidine 5'-phosphate decarboxylase"/>
    <property type="match status" value="1"/>
</dbReference>
<dbReference type="Gene3D" id="3.20.20.70">
    <property type="entry name" value="Aldolase class I"/>
    <property type="match status" value="1"/>
</dbReference>
<dbReference type="HAMAP" id="MF_01200_B">
    <property type="entry name" value="OMPdecase_type1_B"/>
    <property type="match status" value="1"/>
</dbReference>
<dbReference type="InterPro" id="IPR013785">
    <property type="entry name" value="Aldolase_TIM"/>
</dbReference>
<dbReference type="InterPro" id="IPR014732">
    <property type="entry name" value="OMPdecase"/>
</dbReference>
<dbReference type="InterPro" id="IPR018089">
    <property type="entry name" value="OMPdecase_AS"/>
</dbReference>
<dbReference type="InterPro" id="IPR047596">
    <property type="entry name" value="OMPdecase_bac"/>
</dbReference>
<dbReference type="InterPro" id="IPR001754">
    <property type="entry name" value="OMPdeCOase_dom"/>
</dbReference>
<dbReference type="InterPro" id="IPR011060">
    <property type="entry name" value="RibuloseP-bd_barrel"/>
</dbReference>
<dbReference type="NCBIfam" id="NF001273">
    <property type="entry name" value="PRK00230.1"/>
    <property type="match status" value="1"/>
</dbReference>
<dbReference type="NCBIfam" id="TIGR01740">
    <property type="entry name" value="pyrF"/>
    <property type="match status" value="1"/>
</dbReference>
<dbReference type="PANTHER" id="PTHR32119">
    <property type="entry name" value="OROTIDINE 5'-PHOSPHATE DECARBOXYLASE"/>
    <property type="match status" value="1"/>
</dbReference>
<dbReference type="PANTHER" id="PTHR32119:SF2">
    <property type="entry name" value="OROTIDINE 5'-PHOSPHATE DECARBOXYLASE"/>
    <property type="match status" value="1"/>
</dbReference>
<dbReference type="Pfam" id="PF00215">
    <property type="entry name" value="OMPdecase"/>
    <property type="match status" value="1"/>
</dbReference>
<dbReference type="SMART" id="SM00934">
    <property type="entry name" value="OMPdecase"/>
    <property type="match status" value="1"/>
</dbReference>
<dbReference type="SUPFAM" id="SSF51366">
    <property type="entry name" value="Ribulose-phoshate binding barrel"/>
    <property type="match status" value="1"/>
</dbReference>
<dbReference type="PROSITE" id="PS00156">
    <property type="entry name" value="OMPDECASE"/>
    <property type="match status" value="1"/>
</dbReference>